<comment type="function">
    <text evidence="1">Peptide chain release factor 1 directs the termination of translation in response to the peptide chain termination codons UAG and UAA.</text>
</comment>
<comment type="subcellular location">
    <subcellularLocation>
        <location evidence="1">Cytoplasm</location>
    </subcellularLocation>
</comment>
<comment type="PTM">
    <text evidence="1">Methylated by PrmC. Methylation increases the termination efficiency of RF1.</text>
</comment>
<comment type="similarity">
    <text evidence="1">Belongs to the prokaryotic/mitochondrial release factor family.</text>
</comment>
<sequence>MKASILTKLETLVERYEEVQHLLGDPDVIGDQDKFRALSKEYSQLEEVTKCFQAYQQAQDDLAAAEEMAKEDDEEMREMAQEEIKDAKEAIERLADELQILLLPKDPNDDRNCFLEIRAGAGGDEAGIFAGDLFRMYSKYAEKRGWRIEVMSSNEAEHGGYKEMIAKVSGDGAYGVLKFESGGHRVQRVPATESQGRVHTSACTVAVMAEIPEADLPEIKAADLKIDTFRASGAGGQHVNTTDSAIRITHLPTGTVVECQDERSQHKNKAKAMAVLAARIVQAEQERRAAEVSDTRRNLLGSGDRSDRIRTYNYPQGRVSDHRINLTIYRLNEVMEGDLQSLIDPVVQEHQADQLAALAENA</sequence>
<dbReference type="EMBL" id="BA000031">
    <property type="protein sequence ID" value="BAC59006.1"/>
    <property type="molecule type" value="Genomic_DNA"/>
</dbReference>
<dbReference type="RefSeq" id="NP_797122.1">
    <property type="nucleotide sequence ID" value="NC_004603.1"/>
</dbReference>
<dbReference type="RefSeq" id="WP_005456867.1">
    <property type="nucleotide sequence ID" value="NC_004603.1"/>
</dbReference>
<dbReference type="SMR" id="Q87RN4"/>
<dbReference type="GeneID" id="1188238"/>
<dbReference type="KEGG" id="vpa:VP0743"/>
<dbReference type="PATRIC" id="fig|223926.6.peg.710"/>
<dbReference type="eggNOG" id="COG0216">
    <property type="taxonomic scope" value="Bacteria"/>
</dbReference>
<dbReference type="HOGENOM" id="CLU_036856_0_1_6"/>
<dbReference type="Proteomes" id="UP000002493">
    <property type="component" value="Chromosome 1"/>
</dbReference>
<dbReference type="GO" id="GO:0005737">
    <property type="term" value="C:cytoplasm"/>
    <property type="evidence" value="ECO:0007669"/>
    <property type="project" value="UniProtKB-SubCell"/>
</dbReference>
<dbReference type="GO" id="GO:0016149">
    <property type="term" value="F:translation release factor activity, codon specific"/>
    <property type="evidence" value="ECO:0007669"/>
    <property type="project" value="UniProtKB-UniRule"/>
</dbReference>
<dbReference type="FunFam" id="3.30.160.20:FF:000004">
    <property type="entry name" value="Peptide chain release factor 1"/>
    <property type="match status" value="1"/>
</dbReference>
<dbReference type="FunFam" id="3.30.70.1660:FF:000002">
    <property type="entry name" value="Peptide chain release factor 1"/>
    <property type="match status" value="1"/>
</dbReference>
<dbReference type="FunFam" id="3.30.70.1660:FF:000004">
    <property type="entry name" value="Peptide chain release factor 1"/>
    <property type="match status" value="1"/>
</dbReference>
<dbReference type="Gene3D" id="3.30.160.20">
    <property type="match status" value="1"/>
</dbReference>
<dbReference type="Gene3D" id="3.30.70.1660">
    <property type="match status" value="1"/>
</dbReference>
<dbReference type="Gene3D" id="6.10.140.1950">
    <property type="match status" value="1"/>
</dbReference>
<dbReference type="HAMAP" id="MF_00093">
    <property type="entry name" value="Rel_fac_1"/>
    <property type="match status" value="1"/>
</dbReference>
<dbReference type="InterPro" id="IPR005139">
    <property type="entry name" value="PCRF"/>
</dbReference>
<dbReference type="InterPro" id="IPR000352">
    <property type="entry name" value="Pep_chain_release_fac_I"/>
</dbReference>
<dbReference type="InterPro" id="IPR045853">
    <property type="entry name" value="Pep_chain_release_fac_I_sf"/>
</dbReference>
<dbReference type="InterPro" id="IPR050057">
    <property type="entry name" value="Prokaryotic/Mito_RF"/>
</dbReference>
<dbReference type="InterPro" id="IPR004373">
    <property type="entry name" value="RF-1"/>
</dbReference>
<dbReference type="NCBIfam" id="TIGR00019">
    <property type="entry name" value="prfA"/>
    <property type="match status" value="1"/>
</dbReference>
<dbReference type="NCBIfam" id="NF001859">
    <property type="entry name" value="PRK00591.1"/>
    <property type="match status" value="1"/>
</dbReference>
<dbReference type="PANTHER" id="PTHR43804">
    <property type="entry name" value="LD18447P"/>
    <property type="match status" value="1"/>
</dbReference>
<dbReference type="PANTHER" id="PTHR43804:SF7">
    <property type="entry name" value="LD18447P"/>
    <property type="match status" value="1"/>
</dbReference>
<dbReference type="Pfam" id="PF03462">
    <property type="entry name" value="PCRF"/>
    <property type="match status" value="1"/>
</dbReference>
<dbReference type="Pfam" id="PF00472">
    <property type="entry name" value="RF-1"/>
    <property type="match status" value="1"/>
</dbReference>
<dbReference type="SMART" id="SM00937">
    <property type="entry name" value="PCRF"/>
    <property type="match status" value="1"/>
</dbReference>
<dbReference type="SUPFAM" id="SSF75620">
    <property type="entry name" value="Release factor"/>
    <property type="match status" value="1"/>
</dbReference>
<dbReference type="PROSITE" id="PS00745">
    <property type="entry name" value="RF_PROK_I"/>
    <property type="match status" value="1"/>
</dbReference>
<gene>
    <name evidence="1" type="primary">prfA</name>
    <name type="ordered locus">VP0743</name>
</gene>
<reference key="1">
    <citation type="journal article" date="2003" name="Lancet">
        <title>Genome sequence of Vibrio parahaemolyticus: a pathogenic mechanism distinct from that of V. cholerae.</title>
        <authorList>
            <person name="Makino K."/>
            <person name="Oshima K."/>
            <person name="Kurokawa K."/>
            <person name="Yokoyama K."/>
            <person name="Uda T."/>
            <person name="Tagomori K."/>
            <person name="Iijima Y."/>
            <person name="Najima M."/>
            <person name="Nakano M."/>
            <person name="Yamashita A."/>
            <person name="Kubota Y."/>
            <person name="Kimura S."/>
            <person name="Yasunaga T."/>
            <person name="Honda T."/>
            <person name="Shinagawa H."/>
            <person name="Hattori M."/>
            <person name="Iida T."/>
        </authorList>
    </citation>
    <scope>NUCLEOTIDE SEQUENCE [LARGE SCALE GENOMIC DNA]</scope>
    <source>
        <strain>RIMD 2210633</strain>
    </source>
</reference>
<feature type="chain" id="PRO_0000177767" description="Peptide chain release factor 1">
    <location>
        <begin position="1"/>
        <end position="362"/>
    </location>
</feature>
<feature type="modified residue" description="N5-methylglutamine" evidence="1">
    <location>
        <position position="237"/>
    </location>
</feature>
<organism>
    <name type="scientific">Vibrio parahaemolyticus serotype O3:K6 (strain RIMD 2210633)</name>
    <dbReference type="NCBI Taxonomy" id="223926"/>
    <lineage>
        <taxon>Bacteria</taxon>
        <taxon>Pseudomonadati</taxon>
        <taxon>Pseudomonadota</taxon>
        <taxon>Gammaproteobacteria</taxon>
        <taxon>Vibrionales</taxon>
        <taxon>Vibrionaceae</taxon>
        <taxon>Vibrio</taxon>
    </lineage>
</organism>
<keyword id="KW-0963">Cytoplasm</keyword>
<keyword id="KW-0488">Methylation</keyword>
<keyword id="KW-0648">Protein biosynthesis</keyword>
<proteinExistence type="inferred from homology"/>
<evidence type="ECO:0000255" key="1">
    <source>
        <dbReference type="HAMAP-Rule" id="MF_00093"/>
    </source>
</evidence>
<accession>Q87RN4</accession>
<protein>
    <recommendedName>
        <fullName evidence="1">Peptide chain release factor 1</fullName>
        <shortName evidence="1">RF-1</shortName>
    </recommendedName>
</protein>
<name>RF1_VIBPA</name>